<dbReference type="EMBL" id="DQ648794">
    <property type="protein sequence ID" value="ABG47058.1"/>
    <property type="molecule type" value="Genomic_RNA"/>
</dbReference>
<dbReference type="SMR" id="Q0Q4E6"/>
<dbReference type="Proteomes" id="UP000007449">
    <property type="component" value="Genome"/>
</dbReference>
<dbReference type="GO" id="GO:0044172">
    <property type="term" value="C:host cell endoplasmic reticulum-Golgi intermediate compartment"/>
    <property type="evidence" value="ECO:0007669"/>
    <property type="project" value="UniProtKB-SubCell"/>
</dbReference>
<dbReference type="GO" id="GO:0044177">
    <property type="term" value="C:host cell Golgi apparatus"/>
    <property type="evidence" value="ECO:0007669"/>
    <property type="project" value="UniProtKB-SubCell"/>
</dbReference>
<dbReference type="GO" id="GO:1990904">
    <property type="term" value="C:ribonucleoprotein complex"/>
    <property type="evidence" value="ECO:0007669"/>
    <property type="project" value="UniProtKB-KW"/>
</dbReference>
<dbReference type="GO" id="GO:0019013">
    <property type="term" value="C:viral nucleocapsid"/>
    <property type="evidence" value="ECO:0007669"/>
    <property type="project" value="UniProtKB-UniRule"/>
</dbReference>
<dbReference type="GO" id="GO:0003723">
    <property type="term" value="F:RNA binding"/>
    <property type="evidence" value="ECO:0007669"/>
    <property type="project" value="UniProtKB-UniRule"/>
</dbReference>
<dbReference type="CDD" id="cd21595">
    <property type="entry name" value="CoV_N-CTD"/>
    <property type="match status" value="1"/>
</dbReference>
<dbReference type="CDD" id="cd21554">
    <property type="entry name" value="CoV_N-NTD"/>
    <property type="match status" value="1"/>
</dbReference>
<dbReference type="HAMAP" id="MF_04096">
    <property type="entry name" value="BETA_CORONA_NCAP"/>
    <property type="match status" value="1"/>
</dbReference>
<dbReference type="InterPro" id="IPR044344">
    <property type="entry name" value="N_prot_C_CoV"/>
</dbReference>
<dbReference type="InterPro" id="IPR044345">
    <property type="entry name" value="N_prot_N_CoV"/>
</dbReference>
<dbReference type="InterPro" id="IPR043505">
    <property type="entry name" value="NCAP_bCoV"/>
</dbReference>
<dbReference type="InterPro" id="IPR001218">
    <property type="entry name" value="Nucleocap_CoV"/>
</dbReference>
<dbReference type="InterPro" id="IPR037179">
    <property type="entry name" value="Nucleocapsid_C"/>
</dbReference>
<dbReference type="InterPro" id="IPR037195">
    <property type="entry name" value="Nucleocapsid_N"/>
</dbReference>
<dbReference type="Pfam" id="PF00937">
    <property type="entry name" value="CoV_nucleocap"/>
    <property type="match status" value="1"/>
</dbReference>
<dbReference type="PIRSF" id="PIRSF003888">
    <property type="entry name" value="Corona_nucleocap"/>
    <property type="match status" value="1"/>
</dbReference>
<dbReference type="SUPFAM" id="SSF110304">
    <property type="entry name" value="Coronavirus RNA-binding domain"/>
    <property type="match status" value="1"/>
</dbReference>
<dbReference type="SUPFAM" id="SSF103068">
    <property type="entry name" value="Nucleocapsid protein dimerization domain"/>
    <property type="match status" value="1"/>
</dbReference>
<dbReference type="PROSITE" id="PS51929">
    <property type="entry name" value="COV_N_CTD"/>
    <property type="match status" value="1"/>
</dbReference>
<dbReference type="PROSITE" id="PS51928">
    <property type="entry name" value="COV_N_NTD"/>
    <property type="match status" value="1"/>
</dbReference>
<sequence>MATPAAPRTISFADNNDNQPNQQQRGRGRNPKPRPAPNNTVSWYTGLTQHGKNPLAFPPGQGVPLNANSTTAQNAGYWRRQDRKINTGNGVKQLAPRWFFYYTGTGPEANLPFRSVKDGIVWVYEEGATDAPSVFGTRNPANDAAIVCQFAPGTLIPKNFHIEGTGGNSQSSSRASSNSRNSSRSNSRGGRSTSNSRGTSPVSHGVGSAESLAALPLLLDLQKRLADLESGKSKQPKVVTKKDAAAAKNKMRHKRVATKGFNVTQAFGLRGPGPLQGNFGDMNYNKFGTEDPRWPQMAELAPSASAFMSMSQFKLTHQSNDDKGDPIYFLSYSGAIKLDPKNPNYKKWLELLEANIDAYKTFPKKERKPKTTEDGAVVASSSASQMEDVDAKPQRKPKSRVAGSITMRSGSSPALQDVTFDSEA</sequence>
<organism>
    <name type="scientific">Bat coronavirus 133/2005</name>
    <name type="common">BtCoV</name>
    <name type="synonym">BtCoV/133/2005</name>
    <dbReference type="NCBI Taxonomy" id="389230"/>
    <lineage>
        <taxon>Viruses</taxon>
        <taxon>Riboviria</taxon>
        <taxon>Orthornavirae</taxon>
        <taxon>Pisuviricota</taxon>
        <taxon>Pisoniviricetes</taxon>
        <taxon>Nidovirales</taxon>
        <taxon>Cornidovirineae</taxon>
        <taxon>Coronaviridae</taxon>
        <taxon>Orthocoronavirinae</taxon>
        <taxon>Betacoronavirus</taxon>
        <taxon>Merbecovirus</taxon>
        <taxon>Bat coronavirus HKU4</taxon>
    </lineage>
</organism>
<comment type="function">
    <text evidence="2">Packages the positive strand viral genome RNA into a helical ribonucleocapsid (RNP) and plays a fundamental role during virion assembly through its interactions with the viral genome and membrane protein M. Plays an important role in enhancing the efficiency of subgenomic viral RNA transcription as well as viral replication.</text>
</comment>
<comment type="subunit">
    <text evidence="2">Homooligomer. Both monomeric and oligomeric forms interact with RNA. Interacts with protein M. Interacts with NSP3; this interaction serves to tether the genome to the newly translated replicase-transcriptase complex at a very early stage of infection.</text>
</comment>
<comment type="subcellular location">
    <subcellularLocation>
        <location evidence="2">Virion</location>
    </subcellularLocation>
    <subcellularLocation>
        <location evidence="2">Host endoplasmic reticulum-Golgi intermediate compartment</location>
    </subcellularLocation>
    <subcellularLocation>
        <location evidence="2">Host Golgi apparatus</location>
    </subcellularLocation>
    <text evidence="2">Located inside the virion, complexed with the viral RNA. Probably associates with ER-derived membranes where it participates in viral RNA synthesis and virus budding.</text>
</comment>
<comment type="PTM">
    <text evidence="2">ADP-ribosylated. The ADP-ribosylation is retained in the virion during infection.</text>
</comment>
<comment type="PTM">
    <text evidence="2">Phosphorylated on serine and threonine residues.</text>
</comment>
<comment type="similarity">
    <text evidence="2">Belongs to the betacoronavirus nucleocapsid protein family.</text>
</comment>
<proteinExistence type="inferred from homology"/>
<feature type="chain" id="PRO_0000290258" description="Nucleoprotein">
    <location>
        <begin position="1"/>
        <end position="424"/>
    </location>
</feature>
<feature type="domain" description="CoV N NTD" evidence="3">
    <location>
        <begin position="39"/>
        <end position="164"/>
    </location>
</feature>
<feature type="domain" description="CoV N CTD" evidence="4">
    <location>
        <begin position="240"/>
        <end position="363"/>
    </location>
</feature>
<feature type="region of interest" description="Disordered" evidence="5">
    <location>
        <begin position="1"/>
        <end position="41"/>
    </location>
</feature>
<feature type="region of interest" description="RNA-binding" evidence="2">
    <location>
        <begin position="33"/>
        <end position="175"/>
    </location>
</feature>
<feature type="region of interest" description="Disordered" evidence="5">
    <location>
        <begin position="159"/>
        <end position="207"/>
    </location>
</feature>
<feature type="region of interest" description="Disordered" evidence="5">
    <location>
        <begin position="230"/>
        <end position="251"/>
    </location>
</feature>
<feature type="region of interest" description="Dimerization" evidence="2">
    <location>
        <begin position="251"/>
        <end position="360"/>
    </location>
</feature>
<feature type="region of interest" description="Disordered" evidence="5">
    <location>
        <begin position="365"/>
        <end position="424"/>
    </location>
</feature>
<feature type="compositionally biased region" description="Low complexity" evidence="5">
    <location>
        <begin position="13"/>
        <end position="25"/>
    </location>
</feature>
<feature type="compositionally biased region" description="Low complexity" evidence="5">
    <location>
        <begin position="168"/>
        <end position="200"/>
    </location>
</feature>
<feature type="binding site" evidence="1">
    <location>
        <position position="83"/>
    </location>
    <ligand>
        <name>RNA</name>
        <dbReference type="ChEBI" id="CHEBI:33697"/>
    </ligand>
</feature>
<feature type="binding site" evidence="1">
    <location>
        <position position="97"/>
    </location>
    <ligand>
        <name>RNA</name>
        <dbReference type="ChEBI" id="CHEBI:33697"/>
    </ligand>
</feature>
<feature type="binding site" evidence="1">
    <location>
        <position position="138"/>
    </location>
    <ligand>
        <name>RNA</name>
        <dbReference type="ChEBI" id="CHEBI:33697"/>
    </ligand>
</feature>
<feature type="modified residue" description="Phosphoserine; by host" evidence="2">
    <location>
        <position position="133"/>
    </location>
</feature>
<feature type="modified residue" description="Phosphothreonine; by host" evidence="2">
    <location>
        <position position="406"/>
    </location>
</feature>
<accession>Q0Q4E6</accession>
<protein>
    <recommendedName>
        <fullName evidence="2">Nucleoprotein</fullName>
    </recommendedName>
    <alternativeName>
        <fullName evidence="2">Nucleocapsid protein</fullName>
        <shortName evidence="2">NC</shortName>
        <shortName evidence="2">Protein N</shortName>
    </alternativeName>
</protein>
<organismHost>
    <name type="scientific">Tylonycteris pachypus</name>
    <name type="common">Lesser bamboo bat</name>
    <name type="synonym">Vespertilio pachypus</name>
    <dbReference type="NCBI Taxonomy" id="258959"/>
</organismHost>
<evidence type="ECO:0000250" key="1">
    <source>
        <dbReference type="UniProtKB" id="P0DTC9"/>
    </source>
</evidence>
<evidence type="ECO:0000255" key="2">
    <source>
        <dbReference type="HAMAP-Rule" id="MF_04096"/>
    </source>
</evidence>
<evidence type="ECO:0000255" key="3">
    <source>
        <dbReference type="PROSITE-ProRule" id="PRU01276"/>
    </source>
</evidence>
<evidence type="ECO:0000255" key="4">
    <source>
        <dbReference type="PROSITE-ProRule" id="PRU01277"/>
    </source>
</evidence>
<evidence type="ECO:0000256" key="5">
    <source>
        <dbReference type="SAM" id="MobiDB-lite"/>
    </source>
</evidence>
<gene>
    <name evidence="2" type="primary">N</name>
    <name type="ORF">6</name>
</gene>
<keyword id="KW-0013">ADP-ribosylation</keyword>
<keyword id="KW-1040">Host Golgi apparatus</keyword>
<keyword id="KW-0597">Phosphoprotein</keyword>
<keyword id="KW-0687">Ribonucleoprotein</keyword>
<keyword id="KW-0694">RNA-binding</keyword>
<keyword id="KW-0804">Transcription</keyword>
<keyword id="KW-0805">Transcription regulation</keyword>
<keyword id="KW-0543">Viral nucleoprotein</keyword>
<keyword id="KW-0946">Virion</keyword>
<reference key="1">
    <citation type="journal article" date="2006" name="J. Virol.">
        <title>Prevalence and genetic diversity of coronaviruses in bats from China.</title>
        <authorList>
            <person name="Tang X.C."/>
            <person name="Zhang J.X."/>
            <person name="Zhang S.Y."/>
            <person name="Wang P."/>
            <person name="Fan X.H."/>
            <person name="Li L.F."/>
            <person name="Li G."/>
            <person name="Dong B.Q."/>
            <person name="Liu W."/>
            <person name="Cheung C.L."/>
            <person name="Xu K.M."/>
            <person name="Song W.J."/>
            <person name="Vijaykrishna D."/>
            <person name="Poon L.L.M."/>
            <person name="Peiris J.S.M."/>
            <person name="Smith G.J."/>
            <person name="Chen H."/>
            <person name="Guan Y."/>
        </authorList>
    </citation>
    <scope>NUCLEOTIDE SEQUENCE [GENOMIC RNA]</scope>
</reference>
<name>NCAP_BC133</name>